<name>YICR_SALCH</name>
<evidence type="ECO:0000255" key="1">
    <source>
        <dbReference type="HAMAP-Rule" id="MF_00018"/>
    </source>
</evidence>
<evidence type="ECO:0000255" key="2">
    <source>
        <dbReference type="PROSITE-ProRule" id="PRU01182"/>
    </source>
</evidence>
<feature type="chain" id="PRO_0000190723" description="UPF0758 protein YicR">
    <location>
        <begin position="1"/>
        <end position="221"/>
    </location>
</feature>
<feature type="domain" description="MPN" evidence="2">
    <location>
        <begin position="99"/>
        <end position="221"/>
    </location>
</feature>
<feature type="short sequence motif" description="JAMM motif" evidence="2">
    <location>
        <begin position="170"/>
        <end position="183"/>
    </location>
</feature>
<feature type="binding site" evidence="2">
    <location>
        <position position="170"/>
    </location>
    <ligand>
        <name>Zn(2+)</name>
        <dbReference type="ChEBI" id="CHEBI:29105"/>
        <note>catalytic</note>
    </ligand>
</feature>
<feature type="binding site" evidence="2">
    <location>
        <position position="172"/>
    </location>
    <ligand>
        <name>Zn(2+)</name>
        <dbReference type="ChEBI" id="CHEBI:29105"/>
        <note>catalytic</note>
    </ligand>
</feature>
<feature type="binding site" evidence="2">
    <location>
        <position position="183"/>
    </location>
    <ligand>
        <name>Zn(2+)</name>
        <dbReference type="ChEBI" id="CHEBI:29105"/>
        <note>catalytic</note>
    </ligand>
</feature>
<sequence length="221" mass="24890">MDTLDELLPREKMLRSGIASLSDVELLALFLRTGTPGKDVMTLAKEILQHFGSLYGLLSADFAQFRGVNGIGLAKFAQLKGIAELARRYYSVRMNEESALLSPEMTREFLQSQLTGEEREIFLVIFLDAQHRVLQHSRLFSGTLNHVEVHPREIVREAIKLNASAVILAHNHPSGCAEPSKADKLITERVIKCCQFMDIRVLDHLIIGRGEYVSFAERGWI</sequence>
<comment type="similarity">
    <text evidence="1">Belongs to the UPF0758 family. YicR subfamily.</text>
</comment>
<protein>
    <recommendedName>
        <fullName evidence="1">UPF0758 protein YicR</fullName>
    </recommendedName>
</protein>
<organism>
    <name type="scientific">Salmonella choleraesuis (strain SC-B67)</name>
    <dbReference type="NCBI Taxonomy" id="321314"/>
    <lineage>
        <taxon>Bacteria</taxon>
        <taxon>Pseudomonadati</taxon>
        <taxon>Pseudomonadota</taxon>
        <taxon>Gammaproteobacteria</taxon>
        <taxon>Enterobacterales</taxon>
        <taxon>Enterobacteriaceae</taxon>
        <taxon>Salmonella</taxon>
    </lineage>
</organism>
<accession>Q57IA4</accession>
<dbReference type="EMBL" id="AE017220">
    <property type="protein sequence ID" value="AAX67558.1"/>
    <property type="molecule type" value="Genomic_DNA"/>
</dbReference>
<dbReference type="SMR" id="Q57IA4"/>
<dbReference type="KEGG" id="sec:SCH_3652"/>
<dbReference type="HOGENOM" id="CLU_073529_0_1_6"/>
<dbReference type="Proteomes" id="UP000000538">
    <property type="component" value="Chromosome"/>
</dbReference>
<dbReference type="GO" id="GO:0046872">
    <property type="term" value="F:metal ion binding"/>
    <property type="evidence" value="ECO:0007669"/>
    <property type="project" value="UniProtKB-KW"/>
</dbReference>
<dbReference type="GO" id="GO:0008237">
    <property type="term" value="F:metallopeptidase activity"/>
    <property type="evidence" value="ECO:0007669"/>
    <property type="project" value="UniProtKB-KW"/>
</dbReference>
<dbReference type="GO" id="GO:0006508">
    <property type="term" value="P:proteolysis"/>
    <property type="evidence" value="ECO:0007669"/>
    <property type="project" value="UniProtKB-KW"/>
</dbReference>
<dbReference type="CDD" id="cd08071">
    <property type="entry name" value="MPN_DUF2466"/>
    <property type="match status" value="1"/>
</dbReference>
<dbReference type="Gene3D" id="3.40.140.10">
    <property type="entry name" value="Cytidine Deaminase, domain 2"/>
    <property type="match status" value="1"/>
</dbReference>
<dbReference type="HAMAP" id="MF_00018">
    <property type="entry name" value="UPF0758_YicR"/>
    <property type="match status" value="1"/>
</dbReference>
<dbReference type="InterPro" id="IPR037518">
    <property type="entry name" value="MPN"/>
</dbReference>
<dbReference type="InterPro" id="IPR025657">
    <property type="entry name" value="RadC_JAB"/>
</dbReference>
<dbReference type="InterPro" id="IPR010994">
    <property type="entry name" value="RuvA_2-like"/>
</dbReference>
<dbReference type="InterPro" id="IPR001405">
    <property type="entry name" value="UPF0758"/>
</dbReference>
<dbReference type="InterPro" id="IPR020891">
    <property type="entry name" value="UPF0758_CS"/>
</dbReference>
<dbReference type="InterPro" id="IPR046778">
    <property type="entry name" value="UPF0758_N"/>
</dbReference>
<dbReference type="InterPro" id="IPR022820">
    <property type="entry name" value="UPF0758_YicR"/>
</dbReference>
<dbReference type="NCBIfam" id="NF000642">
    <property type="entry name" value="PRK00024.1"/>
    <property type="match status" value="1"/>
</dbReference>
<dbReference type="NCBIfam" id="TIGR00608">
    <property type="entry name" value="radc"/>
    <property type="match status" value="1"/>
</dbReference>
<dbReference type="PANTHER" id="PTHR30471">
    <property type="entry name" value="DNA REPAIR PROTEIN RADC"/>
    <property type="match status" value="1"/>
</dbReference>
<dbReference type="PANTHER" id="PTHR30471:SF3">
    <property type="entry name" value="UPF0758 PROTEIN YEES-RELATED"/>
    <property type="match status" value="1"/>
</dbReference>
<dbReference type="Pfam" id="PF04002">
    <property type="entry name" value="RadC"/>
    <property type="match status" value="1"/>
</dbReference>
<dbReference type="Pfam" id="PF20582">
    <property type="entry name" value="UPF0758_N"/>
    <property type="match status" value="1"/>
</dbReference>
<dbReference type="SUPFAM" id="SSF47781">
    <property type="entry name" value="RuvA domain 2-like"/>
    <property type="match status" value="1"/>
</dbReference>
<dbReference type="PROSITE" id="PS50249">
    <property type="entry name" value="MPN"/>
    <property type="match status" value="1"/>
</dbReference>
<dbReference type="PROSITE" id="PS01302">
    <property type="entry name" value="UPF0758"/>
    <property type="match status" value="1"/>
</dbReference>
<proteinExistence type="inferred from homology"/>
<reference key="1">
    <citation type="journal article" date="2005" name="Nucleic Acids Res.">
        <title>The genome sequence of Salmonella enterica serovar Choleraesuis, a highly invasive and resistant zoonotic pathogen.</title>
        <authorList>
            <person name="Chiu C.-H."/>
            <person name="Tang P."/>
            <person name="Chu C."/>
            <person name="Hu S."/>
            <person name="Bao Q."/>
            <person name="Yu J."/>
            <person name="Chou Y.-Y."/>
            <person name="Wang H.-S."/>
            <person name="Lee Y.-S."/>
        </authorList>
    </citation>
    <scope>NUCLEOTIDE SEQUENCE [LARGE SCALE GENOMIC DNA]</scope>
    <source>
        <strain>SC-B67</strain>
    </source>
</reference>
<gene>
    <name evidence="1" type="primary">yicR</name>
    <name type="ordered locus">SCH_3652</name>
</gene>
<keyword id="KW-0378">Hydrolase</keyword>
<keyword id="KW-0479">Metal-binding</keyword>
<keyword id="KW-0482">Metalloprotease</keyword>
<keyword id="KW-0645">Protease</keyword>
<keyword id="KW-0862">Zinc</keyword>